<evidence type="ECO:0000255" key="1">
    <source>
        <dbReference type="HAMAP-Rule" id="MF_01159"/>
    </source>
</evidence>
<name>YABA_STRPM</name>
<keyword id="KW-0963">Cytoplasm</keyword>
<keyword id="KW-0235">DNA replication</keyword>
<keyword id="KW-0236">DNA replication inhibitor</keyword>
<keyword id="KW-0479">Metal-binding</keyword>
<keyword id="KW-0862">Zinc</keyword>
<gene>
    <name evidence="1" type="primary">yabA</name>
    <name type="ordered locus">M28_Spy0322</name>
</gene>
<accession>Q48V20</accession>
<comment type="function">
    <text evidence="1">Involved in control of chromosome replication initiation. Inhibits the cooperative binding of DnaA to the oriC region, thus negatively regulating initiation of chromosome replication. Inhibits the ability of DnaA-ATP to form a helix on DNA; does not disassemble preformed DnaA-DNA helices. Decreases the residence time of DnaA on the chromosome at its binding sites (oriC, replication forks and promoter-binding sites). Tethers DnaA to the replication machinery via the DNA polymerase beta sliding clamp subunit (dnaN). Associates with oriC and other DnaA targets on the chromosome in a DnaA-dependent manner.</text>
</comment>
<comment type="cofactor">
    <cofactor evidence="1">
        <name>Zn(2+)</name>
        <dbReference type="ChEBI" id="CHEBI:29105"/>
    </cofactor>
    <text evidence="1">Binds 1 zinc ion per subunit.</text>
</comment>
<comment type="subunit">
    <text evidence="1">Homotetramer. Interacts with both DnaA and DnaN, acting as a bridge between these two proteins.</text>
</comment>
<comment type="subcellular location">
    <subcellularLocation>
        <location evidence="1">Cytoplasm</location>
        <location evidence="1">Nucleoid</location>
    </subcellularLocation>
    <text evidence="1">Localizes in tight foci, which correspond to the replisome at mid-cell throughout the cell cycle.</text>
</comment>
<comment type="similarity">
    <text evidence="1">Belongs to the YabA family.</text>
</comment>
<dbReference type="EMBL" id="CP000056">
    <property type="protein sequence ID" value="AAX71436.1"/>
    <property type="molecule type" value="Genomic_DNA"/>
</dbReference>
<dbReference type="RefSeq" id="WP_002985838.1">
    <property type="nucleotide sequence ID" value="NC_007296.2"/>
</dbReference>
<dbReference type="SMR" id="Q48V20"/>
<dbReference type="GeneID" id="69901336"/>
<dbReference type="KEGG" id="spb:M28_Spy0322"/>
<dbReference type="HOGENOM" id="CLU_157169_0_0_9"/>
<dbReference type="GO" id="GO:0009295">
    <property type="term" value="C:nucleoid"/>
    <property type="evidence" value="ECO:0007669"/>
    <property type="project" value="UniProtKB-SubCell"/>
</dbReference>
<dbReference type="GO" id="GO:0006260">
    <property type="term" value="P:DNA replication"/>
    <property type="evidence" value="ECO:0007669"/>
    <property type="project" value="UniProtKB-UniRule"/>
</dbReference>
<dbReference type="HAMAP" id="MF_01159">
    <property type="entry name" value="YabA"/>
    <property type="match status" value="1"/>
</dbReference>
<dbReference type="InterPro" id="IPR010377">
    <property type="entry name" value="YabA"/>
</dbReference>
<dbReference type="NCBIfam" id="NF009640">
    <property type="entry name" value="PRK13169.1-1"/>
    <property type="match status" value="1"/>
</dbReference>
<dbReference type="Pfam" id="PF06156">
    <property type="entry name" value="YabA"/>
    <property type="match status" value="1"/>
</dbReference>
<dbReference type="PIRSF" id="PIRSF021439">
    <property type="entry name" value="DUF972"/>
    <property type="match status" value="1"/>
</dbReference>
<protein>
    <recommendedName>
        <fullName evidence="1">Replication initiation control protein YabA</fullName>
    </recommendedName>
</protein>
<sequence>MNKKELFDAFDGFSQNLMVTLAEIEAMKKQVQSLVEENTILRLENTKLRERLSHLEHETVAKNPSKQRKDHLEGIYDEGFHICNFFYGQRRENDEECMFCRELLDRK</sequence>
<reference key="1">
    <citation type="journal article" date="2005" name="J. Infect. Dis.">
        <title>Genome sequence of a serotype M28 strain of group A Streptococcus: potential new insights into puerperal sepsis and bacterial disease specificity.</title>
        <authorList>
            <person name="Green N.M."/>
            <person name="Zhang S."/>
            <person name="Porcella S.F."/>
            <person name="Nagiec M.J."/>
            <person name="Barbian K.D."/>
            <person name="Beres S.B."/>
            <person name="Lefebvre R.B."/>
            <person name="Musser J.M."/>
        </authorList>
    </citation>
    <scope>NUCLEOTIDE SEQUENCE [LARGE SCALE GENOMIC DNA]</scope>
    <source>
        <strain>MGAS6180</strain>
    </source>
</reference>
<proteinExistence type="inferred from homology"/>
<organism>
    <name type="scientific">Streptococcus pyogenes serotype M28 (strain MGAS6180)</name>
    <dbReference type="NCBI Taxonomy" id="319701"/>
    <lineage>
        <taxon>Bacteria</taxon>
        <taxon>Bacillati</taxon>
        <taxon>Bacillota</taxon>
        <taxon>Bacilli</taxon>
        <taxon>Lactobacillales</taxon>
        <taxon>Streptococcaceae</taxon>
        <taxon>Streptococcus</taxon>
    </lineage>
</organism>
<feature type="chain" id="PRO_1000065592" description="Replication initiation control protein YabA">
    <location>
        <begin position="1"/>
        <end position="107"/>
    </location>
</feature>
<feature type="binding site" evidence="1">
    <location>
        <position position="81"/>
    </location>
    <ligand>
        <name>Zn(2+)</name>
        <dbReference type="ChEBI" id="CHEBI:29105"/>
    </ligand>
</feature>
<feature type="binding site" evidence="1">
    <location>
        <position position="83"/>
    </location>
    <ligand>
        <name>Zn(2+)</name>
        <dbReference type="ChEBI" id="CHEBI:29105"/>
    </ligand>
</feature>
<feature type="binding site" evidence="1">
    <location>
        <position position="97"/>
    </location>
    <ligand>
        <name>Zn(2+)</name>
        <dbReference type="ChEBI" id="CHEBI:29105"/>
    </ligand>
</feature>
<feature type="binding site" evidence="1">
    <location>
        <position position="100"/>
    </location>
    <ligand>
        <name>Zn(2+)</name>
        <dbReference type="ChEBI" id="CHEBI:29105"/>
    </ligand>
</feature>